<accession>A0A2I1C3X9</accession>
<organism>
    <name type="scientific">Aspergillus novofumigatus (strain IBT 16806)</name>
    <dbReference type="NCBI Taxonomy" id="1392255"/>
    <lineage>
        <taxon>Eukaryota</taxon>
        <taxon>Fungi</taxon>
        <taxon>Dikarya</taxon>
        <taxon>Ascomycota</taxon>
        <taxon>Pezizomycotina</taxon>
        <taxon>Eurotiomycetes</taxon>
        <taxon>Eurotiomycetidae</taxon>
        <taxon>Eurotiales</taxon>
        <taxon>Aspergillaceae</taxon>
        <taxon>Aspergillus</taxon>
        <taxon>Aspergillus subgen. Fumigati</taxon>
    </lineage>
</organism>
<dbReference type="EC" id="2.1.1.-" evidence="3 4"/>
<dbReference type="EMBL" id="MSZS01000005">
    <property type="protein sequence ID" value="PKX92303.1"/>
    <property type="molecule type" value="Genomic_DNA"/>
</dbReference>
<dbReference type="SMR" id="A0A2I1C3X9"/>
<dbReference type="STRING" id="1392255.A0A2I1C3X9"/>
<dbReference type="VEuPathDB" id="FungiDB:P174DRAFT_512933"/>
<dbReference type="OMA" id="TNVMHFC"/>
<dbReference type="OrthoDB" id="10027013at2759"/>
<dbReference type="Proteomes" id="UP000234474">
    <property type="component" value="Unassembled WGS sequence"/>
</dbReference>
<dbReference type="GO" id="GO:0008757">
    <property type="term" value="F:S-adenosylmethionine-dependent methyltransferase activity"/>
    <property type="evidence" value="ECO:0007669"/>
    <property type="project" value="InterPro"/>
</dbReference>
<dbReference type="GO" id="GO:0032259">
    <property type="term" value="P:methylation"/>
    <property type="evidence" value="ECO:0007669"/>
    <property type="project" value="UniProtKB-KW"/>
</dbReference>
<dbReference type="CDD" id="cd02440">
    <property type="entry name" value="AdoMet_MTases"/>
    <property type="match status" value="1"/>
</dbReference>
<dbReference type="Gene3D" id="3.40.50.150">
    <property type="entry name" value="Vaccinia Virus protein VP39"/>
    <property type="match status" value="1"/>
</dbReference>
<dbReference type="InterPro" id="IPR051052">
    <property type="entry name" value="Diverse_substrate_MTase"/>
</dbReference>
<dbReference type="InterPro" id="IPR013216">
    <property type="entry name" value="Methyltransf_11"/>
</dbReference>
<dbReference type="InterPro" id="IPR029063">
    <property type="entry name" value="SAM-dependent_MTases_sf"/>
</dbReference>
<dbReference type="PANTHER" id="PTHR44942">
    <property type="entry name" value="METHYLTRANSF_11 DOMAIN-CONTAINING PROTEIN"/>
    <property type="match status" value="1"/>
</dbReference>
<dbReference type="PANTHER" id="PTHR44942:SF4">
    <property type="entry name" value="METHYLTRANSFERASE TYPE 11 DOMAIN-CONTAINING PROTEIN"/>
    <property type="match status" value="1"/>
</dbReference>
<dbReference type="Pfam" id="PF08241">
    <property type="entry name" value="Methyltransf_11"/>
    <property type="match status" value="1"/>
</dbReference>
<dbReference type="SUPFAM" id="SSF53335">
    <property type="entry name" value="S-adenosyl-L-methionine-dependent methyltransferases"/>
    <property type="match status" value="1"/>
</dbReference>
<comment type="function">
    <text evidence="2 3 4">Methyltransferase; part of the gene cluster that mediates the biosynthesis of the tetrahydroxanthone dimer neosartorin, which exhibits antibacterial activity (PubMed:30394754, PubMed:32105084, PubMed:33891392). The two different monomeric units appear to be synthesized by the same set of enzymes, among which the Baeyer-Villiger monooxygenase nsrF is the key enzyme for the divergence of the biosynthetic routes (PubMed:32105084). The pathway begins with the synthesis of atrochrysone thioester by the polyketide synthase nsrB (PubMed:32105084). The atrochrysone carboxyl ACP thioesterase nsrC then breaks the thioester bond and releases the atrochrysone carboxylic acid from AacuL (PubMed:32105084). Atrochrysone carboxylic acid is decarboxylated by the decarboxylase nsrE, and oxidized by the anthrone oxygenase nsrD to yield emodin (PubMed:32105084). Emodin is then reduced to emodin hydroquinone by the oxidoreductase nsrR (PubMed:32105084). A-ring reduction by the short chain dehydrogenase nsrJ, dehydration by the scytalone dehydratase-like protein nsrI and probable spontaneous re-oxidation, results in overall deoxygenation to chrysophanol (PubMed:32105084). The Baeyer-Villiger monooxygenase nsrF accepts chrysophanol as a substrate to insert one oxygen atom at two different positions to yield the precursors of both monomric units (PubMed:30394754, PubMed:32105084, PubMed:33891392). NsrF is promiscuous/flexible in interacting with the 2 (non methylated and methylated) aromatic rings of chrysophanol, thus diverging the biosynthetic pathway at this point (PubMed:30394754, PubMed:32105084, PubMed:33891392). After the hydrolysis of the lactones, methylesterification by the methyltransferase nsrG yields respectively moniliphenone and 2,2',6'-trihydroxy-4-methyl-6-methoxya-cyldiphenylmethanone (PubMed:30394754, PubMed:32105084). The next steps are the hydroxylation by the FAD-dependent monooxygenase nsrK, followed by isomerization by the monooxygenase nsrQ (PubMed:32105084). The short chain dehydrogenase/reductase nsrO then catalyzes the C-5 ketoreduction to give the xanthone skeleton of blennolide C and 5-acetylblennolide A (PubMed:32105084). The acetyltransferase nsrL has a strict substrate specificity and uses only blennolide A but not blennolide C to yield 5-acetylblennolide A as the single-acetylated product (PubMed:30394754). In the final step of the biosynthesis, the heterodimerization of the 2 xanthones, blennolide C and 5-acetylblennolide A, is catalyzed by the cytochrome P450 monooxygenase nsrP (PubMed:30394754). NsrP can utilize at least three different xanthones as its substrates to perform the dimerization reaction (PubMed:30394754).</text>
</comment>
<comment type="pathway">
    <text evidence="2 3 4">Secondary metabolite biosynthesis.</text>
</comment>
<comment type="disruption phenotype">
    <text evidence="2">Impairs the production of neosartorin but accumulates no metabolites related to the neosartorin pathway.</text>
</comment>
<comment type="similarity">
    <text evidence="6">Belongs to the methyltransferase superfamily.</text>
</comment>
<reference key="1">
    <citation type="journal article" date="2018" name="Proc. Natl. Acad. Sci. U.S.A.">
        <title>Linking secondary metabolites to gene clusters through genome sequencing of six diverse Aspergillus species.</title>
        <authorList>
            <person name="Kjaerboelling I."/>
            <person name="Vesth T.C."/>
            <person name="Frisvad J.C."/>
            <person name="Nybo J.L."/>
            <person name="Theobald S."/>
            <person name="Kuo A."/>
            <person name="Bowyer P."/>
            <person name="Matsuda Y."/>
            <person name="Mondo S."/>
            <person name="Lyhne E.K."/>
            <person name="Kogle M.E."/>
            <person name="Clum A."/>
            <person name="Lipzen A."/>
            <person name="Salamov A."/>
            <person name="Ngan C.Y."/>
            <person name="Daum C."/>
            <person name="Chiniquy J."/>
            <person name="Barry K."/>
            <person name="LaButti K."/>
            <person name="Haridas S."/>
            <person name="Simmons B.A."/>
            <person name="Magnuson J.K."/>
            <person name="Mortensen U.H."/>
            <person name="Larsen T.O."/>
            <person name="Grigoriev I.V."/>
            <person name="Baker S.E."/>
            <person name="Andersen M.R."/>
        </authorList>
    </citation>
    <scope>NUCLEOTIDE SEQUENCE [LARGE SCALE GENOMIC DNA]</scope>
    <source>
        <strain>IBT 16806</strain>
    </source>
</reference>
<reference key="2">
    <citation type="journal article" date="2018" name="Org. Lett.">
        <title>Genetic characterization of neosartorin biosynthesis provides insight into heterodimeric natural product generation.</title>
        <authorList>
            <person name="Matsuda Y."/>
            <person name="Gotfredsen C.H."/>
            <person name="Larsen T.O."/>
        </authorList>
    </citation>
    <scope>FUNCTION</scope>
    <scope>DISRUPTION PHENOTYPE</scope>
    <scope>PATHWAY</scope>
</reference>
<reference key="3">
    <citation type="journal article" date="2020" name="Org. Lett.">
        <title>Unraveling the fungal strategy for tetrahydroxanthone biosynthesis and diversification.</title>
        <authorList>
            <person name="Wei X."/>
            <person name="Matsuda Y."/>
        </authorList>
    </citation>
    <scope>FUNCTION</scope>
    <scope>CATALYTIC ACTIVITY</scope>
    <scope>PATHWAY</scope>
</reference>
<reference key="4">
    <citation type="journal article" date="2021" name="J. Nat. Prod.">
        <title>Heterologous biosynthesis of tetrahydroxanthone dimers: determination of key factors for selective or divergent synthesis.</title>
        <authorList>
            <person name="Wei X."/>
            <person name="Chen X."/>
            <person name="Chen L."/>
            <person name="Yan D."/>
            <person name="Wang W.G."/>
            <person name="Matsuda Y."/>
        </authorList>
    </citation>
    <scope>FUNCTION</scope>
    <scope>CATALYTIC ACTIVITY</scope>
    <scope>PATHWAY</scope>
</reference>
<protein>
    <recommendedName>
        <fullName evidence="5">Methyltransferase nsrG</fullName>
        <ecNumber evidence="3 4">2.1.1.-</ecNumber>
    </recommendedName>
    <alternativeName>
        <fullName evidence="5">Neosartorin biosynthesis cluster protein G</fullName>
    </alternativeName>
</protein>
<evidence type="ECO:0000255" key="1"/>
<evidence type="ECO:0000269" key="2">
    <source>
    </source>
</evidence>
<evidence type="ECO:0000269" key="3">
    <source>
    </source>
</evidence>
<evidence type="ECO:0000269" key="4">
    <source>
    </source>
</evidence>
<evidence type="ECO:0000303" key="5">
    <source>
    </source>
</evidence>
<evidence type="ECO:0000305" key="6"/>
<gene>
    <name evidence="5" type="primary">nsrG</name>
    <name type="ORF">P174DRAFT_512933</name>
</gene>
<proteinExistence type="evidence at protein level"/>
<feature type="chain" id="PRO_0000453496" description="Methyltransferase nsrG">
    <location>
        <begin position="1"/>
        <end position="261"/>
    </location>
</feature>
<feature type="region of interest" description="Methyltransferase domain" evidence="1">
    <location>
        <begin position="49"/>
        <end position="141"/>
    </location>
</feature>
<sequence length="261" mass="29410">MEVNDKFFAQDDIFWENYLKGRPRVPDSFFDRIFDYHKAKGGHFGTVHDVGAGNGPYALRLRSRFDHVIVSDIVANNIELARRRLQGEEGFSFRTSRLQDADDIAAGSVDMVFATNVMHFADPQDIAMAAIAHQLRPGALFRQGGRQLLNKANDPTETARVMLRTQGTRGIQSMLPLDDVHQTTPEPNYTGPDDAEIYEDDEGWSFETDLAGVKEHFESFPFVSQFPGAFTEMYRELDDLLADGKPVQGYFPVKVILATRS</sequence>
<name>NSRG_ASPN1</name>
<keyword id="KW-0489">Methyltransferase</keyword>
<keyword id="KW-1185">Reference proteome</keyword>
<keyword id="KW-0949">S-adenosyl-L-methionine</keyword>
<keyword id="KW-0808">Transferase</keyword>